<sequence length="271" mass="29417">MAFKFKTFAAVGALIGSLALVGCGQDEKDPNHIKVGVIVGAEQQVAEVAQKVAKDKYGLDVELVTFNDYVLPNEALSKGDIDANAFQHKPYLDQQLKDRGYKLVAVGNTFVYPIAGYSKKIKSLDELQDGSQVAVPNDPTNLGRSLLLLQKVGLIKLKDGVGLLPTVLDVVENPKNLKIVELEAPQLPRSLDDAQIALAVINTTYASQIGLTPAKNGIFVEDKDSPYVNLIVTREDNKDAENVKKFVQAYQSDEVYEAANKVFNGGAVKGW</sequence>
<dbReference type="EMBL" id="AE005174">
    <property type="protein sequence ID" value="AAG54499.1"/>
    <property type="molecule type" value="Genomic_DNA"/>
</dbReference>
<dbReference type="EMBL" id="BA000007">
    <property type="protein sequence ID" value="BAB33622.1"/>
    <property type="molecule type" value="Genomic_DNA"/>
</dbReference>
<dbReference type="PIR" id="G85504">
    <property type="entry name" value="G85504"/>
</dbReference>
<dbReference type="PIR" id="G90653">
    <property type="entry name" value="G90653"/>
</dbReference>
<dbReference type="RefSeq" id="NP_308226.1">
    <property type="nucleotide sequence ID" value="NC_002695.1"/>
</dbReference>
<dbReference type="RefSeq" id="WP_000874227.1">
    <property type="nucleotide sequence ID" value="NZ_VOAI01000002.1"/>
</dbReference>
<dbReference type="SMR" id="Q8X8V9"/>
<dbReference type="STRING" id="155864.Z0209"/>
<dbReference type="GeneID" id="75170098"/>
<dbReference type="GeneID" id="913959"/>
<dbReference type="KEGG" id="ece:Z0209"/>
<dbReference type="KEGG" id="ecs:ECs_0199"/>
<dbReference type="PATRIC" id="fig|386585.9.peg.303"/>
<dbReference type="eggNOG" id="COG1464">
    <property type="taxonomic scope" value="Bacteria"/>
</dbReference>
<dbReference type="HOGENOM" id="CLU_067080_0_0_6"/>
<dbReference type="OMA" id="DHKITRE"/>
<dbReference type="Proteomes" id="UP000000558">
    <property type="component" value="Chromosome"/>
</dbReference>
<dbReference type="Proteomes" id="UP000002519">
    <property type="component" value="Chromosome"/>
</dbReference>
<dbReference type="GO" id="GO:0005886">
    <property type="term" value="C:plasma membrane"/>
    <property type="evidence" value="ECO:0007669"/>
    <property type="project" value="UniProtKB-SubCell"/>
</dbReference>
<dbReference type="GO" id="GO:0006865">
    <property type="term" value="P:amino acid transport"/>
    <property type="evidence" value="ECO:0007669"/>
    <property type="project" value="UniProtKB-KW"/>
</dbReference>
<dbReference type="CDD" id="cd13598">
    <property type="entry name" value="PBP2_lipoprotein_IlpA_like"/>
    <property type="match status" value="1"/>
</dbReference>
<dbReference type="FunFam" id="3.40.190.10:FF:000016">
    <property type="entry name" value="Lipoprotein"/>
    <property type="match status" value="1"/>
</dbReference>
<dbReference type="Gene3D" id="3.40.190.10">
    <property type="entry name" value="Periplasmic binding protein-like II"/>
    <property type="match status" value="2"/>
</dbReference>
<dbReference type="InterPro" id="IPR004872">
    <property type="entry name" value="Lipoprotein_NlpA"/>
</dbReference>
<dbReference type="NCBIfam" id="TIGR00363">
    <property type="entry name" value="MetQ/NlpA family lipoprotein"/>
    <property type="match status" value="1"/>
</dbReference>
<dbReference type="NCBIfam" id="NF008285">
    <property type="entry name" value="PRK11063.1"/>
    <property type="match status" value="1"/>
</dbReference>
<dbReference type="PANTHER" id="PTHR30429">
    <property type="entry name" value="D-METHIONINE-BINDING LIPOPROTEIN METQ"/>
    <property type="match status" value="1"/>
</dbReference>
<dbReference type="PANTHER" id="PTHR30429:SF1">
    <property type="entry name" value="D-METHIONINE-BINDING LIPOPROTEIN METQ-RELATED"/>
    <property type="match status" value="1"/>
</dbReference>
<dbReference type="Pfam" id="PF03180">
    <property type="entry name" value="Lipoprotein_9"/>
    <property type="match status" value="1"/>
</dbReference>
<dbReference type="PIRSF" id="PIRSF002854">
    <property type="entry name" value="MetQ"/>
    <property type="match status" value="1"/>
</dbReference>
<dbReference type="SUPFAM" id="SSF53850">
    <property type="entry name" value="Periplasmic binding protein-like II"/>
    <property type="match status" value="1"/>
</dbReference>
<dbReference type="PROSITE" id="PS51257">
    <property type="entry name" value="PROKAR_LIPOPROTEIN"/>
    <property type="match status" value="1"/>
</dbReference>
<gene>
    <name type="primary">metQ</name>
    <name type="ordered locus">Z0209</name>
    <name type="ordered locus">ECs0199</name>
</gene>
<comment type="function">
    <text evidence="1">This protein is a component of a D-methionine permease, a binding protein-dependent, ATP-driven transport system.</text>
</comment>
<comment type="subcellular location">
    <subcellularLocation>
        <location evidence="3">Cell membrane</location>
        <topology evidence="3">Lipid-anchor</topology>
    </subcellularLocation>
</comment>
<comment type="miscellaneous">
    <text evidence="1">The MetNIQ system is also to be able to transport the toxic methionine analog alpha-methyl-methionine.</text>
</comment>
<comment type="similarity">
    <text evidence="3">Belongs to the NlpA lipoprotein family.</text>
</comment>
<name>METQ_ECO57</name>
<keyword id="KW-0029">Amino-acid transport</keyword>
<keyword id="KW-1003">Cell membrane</keyword>
<keyword id="KW-0449">Lipoprotein</keyword>
<keyword id="KW-0472">Membrane</keyword>
<keyword id="KW-0564">Palmitate</keyword>
<keyword id="KW-1185">Reference proteome</keyword>
<keyword id="KW-0732">Signal</keyword>
<keyword id="KW-0813">Transport</keyword>
<organism>
    <name type="scientific">Escherichia coli O157:H7</name>
    <dbReference type="NCBI Taxonomy" id="83334"/>
    <lineage>
        <taxon>Bacteria</taxon>
        <taxon>Pseudomonadati</taxon>
        <taxon>Pseudomonadota</taxon>
        <taxon>Gammaproteobacteria</taxon>
        <taxon>Enterobacterales</taxon>
        <taxon>Enterobacteriaceae</taxon>
        <taxon>Escherichia</taxon>
    </lineage>
</organism>
<proteinExistence type="inferred from homology"/>
<accession>Q8X8V9</accession>
<feature type="signal peptide" evidence="2">
    <location>
        <begin position="1"/>
        <end position="22"/>
    </location>
</feature>
<feature type="chain" id="PRO_0000019740" description="D-methionine-binding lipoprotein MetQ">
    <location>
        <begin position="23"/>
        <end position="271"/>
    </location>
</feature>
<feature type="lipid moiety-binding region" description="N-palmitoyl cysteine" evidence="2">
    <location>
        <position position="23"/>
    </location>
</feature>
<feature type="lipid moiety-binding region" description="S-diacylglycerol cysteine" evidence="2">
    <location>
        <position position="23"/>
    </location>
</feature>
<reference key="1">
    <citation type="journal article" date="2001" name="Nature">
        <title>Genome sequence of enterohaemorrhagic Escherichia coli O157:H7.</title>
        <authorList>
            <person name="Perna N.T."/>
            <person name="Plunkett G. III"/>
            <person name="Burland V."/>
            <person name="Mau B."/>
            <person name="Glasner J.D."/>
            <person name="Rose D.J."/>
            <person name="Mayhew G.F."/>
            <person name="Evans P.S."/>
            <person name="Gregor J."/>
            <person name="Kirkpatrick H.A."/>
            <person name="Posfai G."/>
            <person name="Hackett J."/>
            <person name="Klink S."/>
            <person name="Boutin A."/>
            <person name="Shao Y."/>
            <person name="Miller L."/>
            <person name="Grotbeck E.J."/>
            <person name="Davis N.W."/>
            <person name="Lim A."/>
            <person name="Dimalanta E.T."/>
            <person name="Potamousis K."/>
            <person name="Apodaca J."/>
            <person name="Anantharaman T.S."/>
            <person name="Lin J."/>
            <person name="Yen G."/>
            <person name="Schwartz D.C."/>
            <person name="Welch R.A."/>
            <person name="Blattner F.R."/>
        </authorList>
    </citation>
    <scope>NUCLEOTIDE SEQUENCE [LARGE SCALE GENOMIC DNA]</scope>
    <source>
        <strain>O157:H7 / EDL933 / ATCC 700927 / EHEC</strain>
    </source>
</reference>
<reference key="2">
    <citation type="journal article" date="2001" name="DNA Res.">
        <title>Complete genome sequence of enterohemorrhagic Escherichia coli O157:H7 and genomic comparison with a laboratory strain K-12.</title>
        <authorList>
            <person name="Hayashi T."/>
            <person name="Makino K."/>
            <person name="Ohnishi M."/>
            <person name="Kurokawa K."/>
            <person name="Ishii K."/>
            <person name="Yokoyama K."/>
            <person name="Han C.-G."/>
            <person name="Ohtsubo E."/>
            <person name="Nakayama K."/>
            <person name="Murata T."/>
            <person name="Tanaka M."/>
            <person name="Tobe T."/>
            <person name="Iida T."/>
            <person name="Takami H."/>
            <person name="Honda T."/>
            <person name="Sasakawa C."/>
            <person name="Ogasawara N."/>
            <person name="Yasunaga T."/>
            <person name="Kuhara S."/>
            <person name="Shiba T."/>
            <person name="Hattori M."/>
            <person name="Shinagawa H."/>
        </authorList>
    </citation>
    <scope>NUCLEOTIDE SEQUENCE [LARGE SCALE GENOMIC DNA]</scope>
    <source>
        <strain>O157:H7 / Sakai / RIMD 0509952 / EHEC</strain>
    </source>
</reference>
<evidence type="ECO:0000250" key="1"/>
<evidence type="ECO:0000255" key="2">
    <source>
        <dbReference type="PROSITE-ProRule" id="PRU00303"/>
    </source>
</evidence>
<evidence type="ECO:0000305" key="3"/>
<protein>
    <recommendedName>
        <fullName>D-methionine-binding lipoprotein MetQ</fullName>
    </recommendedName>
</protein>